<sequence length="212" mass="22879">MGLHLGLIDYGMGNLHSVEKAFNRLGHQPSRVVNPSDLDGCDALVLPGVGSFDPAIDNLQSTGLIPDLKRWNEADRPLLGICLGLQLLFESSAEGRLEGLGLIKGHVERLPIGAGARIPHMGWAPLDLRRANPMLAAADPLAWVYFVHSYAAVPERPETLAAAASFGSSSVTAMVWQRRLGACQFHPEKSSDSGSAMLKRWLDWLQRGAPIG</sequence>
<feature type="chain" id="PRO_0000152435" description="Imidazole glycerol phosphate synthase subunit HisH 2">
    <location>
        <begin position="1"/>
        <end position="212"/>
    </location>
</feature>
<feature type="domain" description="Glutamine amidotransferase type-1">
    <location>
        <begin position="4"/>
        <end position="211"/>
    </location>
</feature>
<feature type="active site" description="Nucleophile" evidence="1">
    <location>
        <position position="82"/>
    </location>
</feature>
<feature type="active site" evidence="1">
    <location>
        <position position="186"/>
    </location>
</feature>
<feature type="active site" evidence="1">
    <location>
        <position position="188"/>
    </location>
</feature>
<comment type="function">
    <text evidence="1">IGPS catalyzes the conversion of PRFAR and glutamine to IGP, AICAR and glutamate. The HisH subunit provides the glutamine amidotransferase activity that produces the ammonia necessary to HisF for the synthesis of IGP and AICAR (By similarity).</text>
</comment>
<comment type="catalytic activity">
    <reaction>
        <text>5-[(5-phospho-1-deoxy-D-ribulos-1-ylimino)methylamino]-1-(5-phospho-beta-D-ribosyl)imidazole-4-carboxamide + L-glutamine = D-erythro-1-(imidazol-4-yl)glycerol 3-phosphate + 5-amino-1-(5-phospho-beta-D-ribosyl)imidazole-4-carboxamide + L-glutamate + H(+)</text>
        <dbReference type="Rhea" id="RHEA:24793"/>
        <dbReference type="ChEBI" id="CHEBI:15378"/>
        <dbReference type="ChEBI" id="CHEBI:29985"/>
        <dbReference type="ChEBI" id="CHEBI:58278"/>
        <dbReference type="ChEBI" id="CHEBI:58359"/>
        <dbReference type="ChEBI" id="CHEBI:58475"/>
        <dbReference type="ChEBI" id="CHEBI:58525"/>
        <dbReference type="EC" id="4.3.2.10"/>
    </reaction>
</comment>
<comment type="catalytic activity">
    <reaction>
        <text>L-glutamine + H2O = L-glutamate + NH4(+)</text>
        <dbReference type="Rhea" id="RHEA:15889"/>
        <dbReference type="ChEBI" id="CHEBI:15377"/>
        <dbReference type="ChEBI" id="CHEBI:28938"/>
        <dbReference type="ChEBI" id="CHEBI:29985"/>
        <dbReference type="ChEBI" id="CHEBI:58359"/>
        <dbReference type="EC" id="3.5.1.2"/>
    </reaction>
</comment>
<comment type="pathway">
    <text>Amino-acid biosynthesis; L-histidine biosynthesis; L-histidine from 5-phospho-alpha-D-ribose 1-diphosphate: step 5/9.</text>
</comment>
<comment type="subunit">
    <text evidence="1">Heterodimer of HisH and HisF.</text>
</comment>
<comment type="subcellular location">
    <subcellularLocation>
        <location evidence="1">Cytoplasm</location>
    </subcellularLocation>
</comment>
<protein>
    <recommendedName>
        <fullName>Imidazole glycerol phosphate synthase subunit HisH 2</fullName>
        <ecNumber>4.3.2.10</ecNumber>
    </recommendedName>
    <alternativeName>
        <fullName>IGP synthase glutaminase subunit 2</fullName>
        <ecNumber>3.5.1.2</ecNumber>
    </alternativeName>
    <alternativeName>
        <fullName>IGP synthase subunit HisH 2</fullName>
    </alternativeName>
    <alternativeName>
        <fullName>ImGP synthase subunit HisH 2</fullName>
        <shortName>IGPS subunit HisH 2</shortName>
    </alternativeName>
</protein>
<name>HIS52_PARMW</name>
<organism>
    <name type="scientific">Parasynechococcus marenigrum (strain WH8102)</name>
    <dbReference type="NCBI Taxonomy" id="84588"/>
    <lineage>
        <taxon>Bacteria</taxon>
        <taxon>Bacillati</taxon>
        <taxon>Cyanobacteriota</taxon>
        <taxon>Cyanophyceae</taxon>
        <taxon>Synechococcales</taxon>
        <taxon>Prochlorococcaceae</taxon>
        <taxon>Parasynechococcus</taxon>
        <taxon>Parasynechococcus marenigrum</taxon>
    </lineage>
</organism>
<accession>Q7U899</accession>
<keyword id="KW-0028">Amino-acid biosynthesis</keyword>
<keyword id="KW-0963">Cytoplasm</keyword>
<keyword id="KW-0315">Glutamine amidotransferase</keyword>
<keyword id="KW-0368">Histidine biosynthesis</keyword>
<keyword id="KW-0378">Hydrolase</keyword>
<keyword id="KW-0456">Lyase</keyword>
<reference key="1">
    <citation type="journal article" date="2003" name="Nature">
        <title>The genome of a motile marine Synechococcus.</title>
        <authorList>
            <person name="Palenik B."/>
            <person name="Brahamsha B."/>
            <person name="Larimer F.W."/>
            <person name="Land M.L."/>
            <person name="Hauser L."/>
            <person name="Chain P."/>
            <person name="Lamerdin J.E."/>
            <person name="Regala W."/>
            <person name="Allen E.E."/>
            <person name="McCarren J."/>
            <person name="Paulsen I.T."/>
            <person name="Dufresne A."/>
            <person name="Partensky F."/>
            <person name="Webb E.A."/>
            <person name="Waterbury J."/>
        </authorList>
    </citation>
    <scope>NUCLEOTIDE SEQUENCE [LARGE SCALE GENOMIC DNA]</scope>
    <source>
        <strain>WH8102</strain>
    </source>
</reference>
<evidence type="ECO:0000250" key="1"/>
<proteinExistence type="inferred from homology"/>
<gene>
    <name type="primary">hisH2</name>
    <name type="ordered locus">SYNW0723</name>
</gene>
<dbReference type="EC" id="4.3.2.10"/>
<dbReference type="EC" id="3.5.1.2"/>
<dbReference type="EMBL" id="BX569691">
    <property type="protein sequence ID" value="CAE07238.1"/>
    <property type="molecule type" value="Genomic_DNA"/>
</dbReference>
<dbReference type="RefSeq" id="WP_011127589.1">
    <property type="nucleotide sequence ID" value="NC_005070.1"/>
</dbReference>
<dbReference type="SMR" id="Q7U899"/>
<dbReference type="STRING" id="84588.SYNW0723"/>
<dbReference type="KEGG" id="syw:SYNW0723"/>
<dbReference type="eggNOG" id="COG0118">
    <property type="taxonomic scope" value="Bacteria"/>
</dbReference>
<dbReference type="HOGENOM" id="CLU_071837_2_2_3"/>
<dbReference type="UniPathway" id="UPA00031">
    <property type="reaction ID" value="UER00010"/>
</dbReference>
<dbReference type="Proteomes" id="UP000001422">
    <property type="component" value="Chromosome"/>
</dbReference>
<dbReference type="GO" id="GO:0005737">
    <property type="term" value="C:cytoplasm"/>
    <property type="evidence" value="ECO:0007669"/>
    <property type="project" value="UniProtKB-SubCell"/>
</dbReference>
<dbReference type="GO" id="GO:0004359">
    <property type="term" value="F:glutaminase activity"/>
    <property type="evidence" value="ECO:0007669"/>
    <property type="project" value="UniProtKB-EC"/>
</dbReference>
<dbReference type="GO" id="GO:0000107">
    <property type="term" value="F:imidazoleglycerol-phosphate synthase activity"/>
    <property type="evidence" value="ECO:0007669"/>
    <property type="project" value="UniProtKB-UniRule"/>
</dbReference>
<dbReference type="GO" id="GO:0016829">
    <property type="term" value="F:lyase activity"/>
    <property type="evidence" value="ECO:0007669"/>
    <property type="project" value="UniProtKB-KW"/>
</dbReference>
<dbReference type="GO" id="GO:0000105">
    <property type="term" value="P:L-histidine biosynthetic process"/>
    <property type="evidence" value="ECO:0007669"/>
    <property type="project" value="UniProtKB-UniRule"/>
</dbReference>
<dbReference type="CDD" id="cd01748">
    <property type="entry name" value="GATase1_IGP_Synthase"/>
    <property type="match status" value="1"/>
</dbReference>
<dbReference type="Gene3D" id="3.40.50.880">
    <property type="match status" value="1"/>
</dbReference>
<dbReference type="HAMAP" id="MF_00278">
    <property type="entry name" value="HisH"/>
    <property type="match status" value="1"/>
</dbReference>
<dbReference type="InterPro" id="IPR029062">
    <property type="entry name" value="Class_I_gatase-like"/>
</dbReference>
<dbReference type="InterPro" id="IPR017926">
    <property type="entry name" value="GATASE"/>
</dbReference>
<dbReference type="InterPro" id="IPR010139">
    <property type="entry name" value="Imidazole-glycPsynth_HisH"/>
</dbReference>
<dbReference type="NCBIfam" id="TIGR01855">
    <property type="entry name" value="IMP_synth_hisH"/>
    <property type="match status" value="1"/>
</dbReference>
<dbReference type="PANTHER" id="PTHR42701">
    <property type="entry name" value="IMIDAZOLE GLYCEROL PHOSPHATE SYNTHASE SUBUNIT HISH"/>
    <property type="match status" value="1"/>
</dbReference>
<dbReference type="PANTHER" id="PTHR42701:SF1">
    <property type="entry name" value="IMIDAZOLE GLYCEROL PHOSPHATE SYNTHASE SUBUNIT HISH"/>
    <property type="match status" value="1"/>
</dbReference>
<dbReference type="Pfam" id="PF00117">
    <property type="entry name" value="GATase"/>
    <property type="match status" value="1"/>
</dbReference>
<dbReference type="PIRSF" id="PIRSF000495">
    <property type="entry name" value="Amidotransf_hisH"/>
    <property type="match status" value="1"/>
</dbReference>
<dbReference type="SUPFAM" id="SSF52317">
    <property type="entry name" value="Class I glutamine amidotransferase-like"/>
    <property type="match status" value="1"/>
</dbReference>
<dbReference type="PROSITE" id="PS51273">
    <property type="entry name" value="GATASE_TYPE_1"/>
    <property type="match status" value="1"/>
</dbReference>